<dbReference type="EMBL" id="AB012247">
    <property type="protein sequence ID" value="BAB02679.1"/>
    <property type="status" value="ALT_SEQ"/>
    <property type="molecule type" value="Genomic_DNA"/>
</dbReference>
<dbReference type="EMBL" id="CP002686">
    <property type="status" value="NOT_ANNOTATED_CDS"/>
    <property type="molecule type" value="Genomic_DNA"/>
</dbReference>
<dbReference type="SMR" id="F4J1G1"/>
<dbReference type="BioGRID" id="6192">
    <property type="interactions" value="1"/>
</dbReference>
<dbReference type="FunCoup" id="F4J1G1">
    <property type="interactions" value="8"/>
</dbReference>
<dbReference type="IntAct" id="F4J1G1">
    <property type="interactions" value="2"/>
</dbReference>
<dbReference type="GlyGen" id="F4J1G1">
    <property type="glycosylation" value="1 site"/>
</dbReference>
<dbReference type="PaxDb" id="3702-AT3G16130.1"/>
<dbReference type="Araport" id="AT3G16130"/>
<dbReference type="TAIR" id="AT3G16130">
    <property type="gene designation" value="ROPGEF13"/>
</dbReference>
<dbReference type="eggNOG" id="ENOG502QSGR">
    <property type="taxonomic scope" value="Eukaryota"/>
</dbReference>
<dbReference type="HOGENOM" id="CLU_019073_1_0_1"/>
<dbReference type="InParanoid" id="F4J1G1"/>
<dbReference type="PRO" id="PR:F4J1G1"/>
<dbReference type="Proteomes" id="UP000006548">
    <property type="component" value="Chromosome 3"/>
</dbReference>
<dbReference type="ExpressionAtlas" id="F4J1G1">
    <property type="expression patterns" value="baseline and differential"/>
</dbReference>
<dbReference type="GO" id="GO:0005886">
    <property type="term" value="C:plasma membrane"/>
    <property type="evidence" value="ECO:0000318"/>
    <property type="project" value="GO_Central"/>
</dbReference>
<dbReference type="GO" id="GO:0005085">
    <property type="term" value="F:guanyl-nucleotide exchange factor activity"/>
    <property type="evidence" value="ECO:0000250"/>
    <property type="project" value="TAIR"/>
</dbReference>
<dbReference type="FunFam" id="1.20.58.2010:FF:000003">
    <property type="entry name" value="Rop guanine nucleotide exchange factor 14"/>
    <property type="match status" value="1"/>
</dbReference>
<dbReference type="FunFam" id="1.20.58.1310:FF:000001">
    <property type="entry name" value="Rop guanine nucleotide exchange factor 9"/>
    <property type="match status" value="1"/>
</dbReference>
<dbReference type="Gene3D" id="1.20.58.2010">
    <property type="entry name" value="PRONE domain, subdomain 1"/>
    <property type="match status" value="1"/>
</dbReference>
<dbReference type="Gene3D" id="1.20.58.1310">
    <property type="entry name" value="PRONE domain, subdomain 2"/>
    <property type="match status" value="1"/>
</dbReference>
<dbReference type="InterPro" id="IPR005512">
    <property type="entry name" value="PRONE_dom"/>
</dbReference>
<dbReference type="InterPro" id="IPR038937">
    <property type="entry name" value="RopGEF"/>
</dbReference>
<dbReference type="PANTHER" id="PTHR33101">
    <property type="entry name" value="ROP GUANINE NUCLEOTIDE EXCHANGE FACTOR 1"/>
    <property type="match status" value="1"/>
</dbReference>
<dbReference type="PANTHER" id="PTHR33101:SF63">
    <property type="entry name" value="ROP GUANINE NUCLEOTIDE EXCHANGE FACTOR 13"/>
    <property type="match status" value="1"/>
</dbReference>
<dbReference type="Pfam" id="PF03759">
    <property type="entry name" value="PRONE"/>
    <property type="match status" value="1"/>
</dbReference>
<dbReference type="PROSITE" id="PS51334">
    <property type="entry name" value="PRONE"/>
    <property type="match status" value="1"/>
</dbReference>
<gene>
    <name evidence="6" type="primary">ROPGEF13</name>
    <name evidence="7" type="synonym">PIRF2</name>
    <name evidence="9" type="ordered locus">At3g16130</name>
    <name evidence="10" type="ORF">MSL1.17</name>
</gene>
<accession>F4J1G1</accession>
<accession>Q9LW73</accession>
<reference key="1">
    <citation type="journal article" date="2000" name="DNA Res.">
        <title>Structural analysis of Arabidopsis thaliana chromosome 3. I. Sequence features of the regions of 4,504,864 bp covered by sixty P1 and TAC clones.</title>
        <authorList>
            <person name="Sato S."/>
            <person name="Nakamura Y."/>
            <person name="Kaneko T."/>
            <person name="Katoh T."/>
            <person name="Asamizu E."/>
            <person name="Tabata S."/>
        </authorList>
    </citation>
    <scope>NUCLEOTIDE SEQUENCE [LARGE SCALE GENOMIC DNA]</scope>
    <source>
        <strain>cv. Columbia</strain>
    </source>
</reference>
<reference key="2">
    <citation type="journal article" date="2017" name="Plant J.">
        <title>Araport11: a complete reannotation of the Arabidopsis thaliana reference genome.</title>
        <authorList>
            <person name="Cheng C.Y."/>
            <person name="Krishnakumar V."/>
            <person name="Chan A.P."/>
            <person name="Thibaud-Nissen F."/>
            <person name="Schobel S."/>
            <person name="Town C.D."/>
        </authorList>
    </citation>
    <scope>GENOME REANNOTATION</scope>
    <source>
        <strain>cv. Columbia</strain>
    </source>
</reference>
<reference key="3">
    <citation type="journal article" date="2010" name="J. Biol. Chem.">
        <title>A small GTPase activator protein interacts with cytoplasmic phytochromes in regulating root development.</title>
        <authorList>
            <person name="Shin D.H."/>
            <person name="Cho M.H."/>
            <person name="Kim T.L."/>
            <person name="Yoo J."/>
            <person name="Kim J.I."/>
            <person name="Han Y.J."/>
            <person name="Song P.S."/>
            <person name="Jeon J.S."/>
            <person name="Bhoo S.H."/>
            <person name="Hahn T.R."/>
        </authorList>
    </citation>
    <scope>TISSUE SPECIFICITY</scope>
</reference>
<reference key="4">
    <citation type="journal article" date="2005" name="Nature">
        <title>A new family of RhoGEFs activates the Rop molecular switch in plants.</title>
        <authorList>
            <person name="Berken A."/>
            <person name="Thomas C."/>
            <person name="Wittinghofer A."/>
        </authorList>
    </citation>
    <scope>GENE FAMILY</scope>
</reference>
<reference key="5">
    <citation type="journal article" date="2016" name="Nature">
        <title>Tip-localized receptors control pollen tube growth and LURE sensing in Arabidopsis.</title>
        <authorList>
            <person name="Takeuchi H."/>
            <person name="Higashiyama T."/>
        </authorList>
    </citation>
    <scope>INTERACTION WITH PRK6</scope>
</reference>
<feature type="chain" id="PRO_0000423898" description="Rop guanine nucleotide exchange factor 13">
    <location>
        <begin position="1"/>
        <end position="576"/>
    </location>
</feature>
<feature type="domain" description="PRONE" evidence="2">
    <location>
        <begin position="119"/>
        <end position="485"/>
    </location>
</feature>
<feature type="region of interest" description="Disordered" evidence="3">
    <location>
        <begin position="557"/>
        <end position="576"/>
    </location>
</feature>
<feature type="compositionally biased region" description="Polar residues" evidence="3">
    <location>
        <begin position="557"/>
        <end position="570"/>
    </location>
</feature>
<organism>
    <name type="scientific">Arabidopsis thaliana</name>
    <name type="common">Mouse-ear cress</name>
    <dbReference type="NCBI Taxonomy" id="3702"/>
    <lineage>
        <taxon>Eukaryota</taxon>
        <taxon>Viridiplantae</taxon>
        <taxon>Streptophyta</taxon>
        <taxon>Embryophyta</taxon>
        <taxon>Tracheophyta</taxon>
        <taxon>Spermatophyta</taxon>
        <taxon>Magnoliopsida</taxon>
        <taxon>eudicotyledons</taxon>
        <taxon>Gunneridae</taxon>
        <taxon>Pentapetalae</taxon>
        <taxon>rosids</taxon>
        <taxon>malvids</taxon>
        <taxon>Brassicales</taxon>
        <taxon>Brassicaceae</taxon>
        <taxon>Camelineae</taxon>
        <taxon>Arabidopsis</taxon>
    </lineage>
</organism>
<proteinExistence type="evidence at protein level"/>
<name>ROGFD_ARATH</name>
<keyword id="KW-0344">Guanine-nucleotide releasing factor</keyword>
<keyword id="KW-1185">Reference proteome</keyword>
<protein>
    <recommendedName>
        <fullName evidence="6">Rop guanine nucleotide exchange factor 13</fullName>
        <shortName evidence="6">AtRopGEF13</shortName>
    </recommendedName>
    <alternativeName>
        <fullName evidence="7">Phytochrome interacting RopGEF 2</fullName>
    </alternativeName>
    <alternativeName>
        <fullName evidence="6">Rho of plants guanine nucleotide exchange factor 13</fullName>
    </alternativeName>
</protein>
<evidence type="ECO:0000250" key="1"/>
<evidence type="ECO:0000255" key="2">
    <source>
        <dbReference type="PROSITE-ProRule" id="PRU00663"/>
    </source>
</evidence>
<evidence type="ECO:0000256" key="3">
    <source>
        <dbReference type="SAM" id="MobiDB-lite"/>
    </source>
</evidence>
<evidence type="ECO:0000269" key="4">
    <source>
    </source>
</evidence>
<evidence type="ECO:0000269" key="5">
    <source>
    </source>
</evidence>
<evidence type="ECO:0000303" key="6">
    <source>
    </source>
</evidence>
<evidence type="ECO:0000303" key="7">
    <source>
    </source>
</evidence>
<evidence type="ECO:0000305" key="8"/>
<evidence type="ECO:0000312" key="9">
    <source>
        <dbReference type="Araport" id="AT3G16130"/>
    </source>
</evidence>
<evidence type="ECO:0000312" key="10">
    <source>
        <dbReference type="EMBL" id="BAB02679.1"/>
    </source>
</evidence>
<sequence length="576" mass="65946">MVKASEKEHEKYKPKLFDLENVKKKNSSSRHFKRWNSDSALRIEDPDIDDGTVFKKTATSSIQPILPVLAMDEQPQPREATDEESQKDSGKREIISFLGYNEKFTRDQVILRFRGLQAKSCYFAYVTELEQMKDKFAKLLLGEDMSGGSKGVSSALALSNAITNLAASAFGEIRRLEAISEDKKERWRREIGWLLSVTDHIVEFSPTHQTNEDGSSMEVMTTKQRTDLVSNIPSLKKLDEMLLDCLDKFKDQDEFYYVTPGSPESENSNSTRNDDKWWLPIVKVPPKGLSETLKRFLLSQRECVCQVLNSAMAINSQVLTEMEIPESYIDSLPKKGRASLGDMIYRMITLEMFDAEQFLLEMDLSSEHKILDLKNKFEASVVIWQRKIVQIDNKSSSPWSTNLSMDKRQQLEERAATILQLIKQEFPGISQSTLDISKIQFNRDIGLAIVESYSRILESLAHTVMSRIEDVLEADQLTQNPELAMCKIHIVKETESPEKEEEPNFCLLEDRPKKQKPTISLSEVMQWNIETNEPRKEKSDKKLLTRVSSMIMSNNKKTTYLESLGTTRSPTAGRYS</sequence>
<comment type="function">
    <text evidence="1">Guanine-nucleotide exchange factor (GEF) that acts as an activator of Rop (Rho of plants) GTPases by promoting the exchange of GDP for GTP.</text>
</comment>
<comment type="subunit">
    <text evidence="5">Interacts with PRK6.</text>
</comment>
<comment type="tissue specificity">
    <text evidence="4">Specifically expressed in mature flowers.</text>
</comment>
<comment type="domain">
    <text evidence="1">The PRONE (plant-specific Rop nucleotide exchanger) domain is responsible for the GEF activity.</text>
</comment>
<comment type="sequence caution" evidence="8">
    <conflict type="erroneous gene model prediction">
        <sequence resource="EMBL-CDS" id="BAB02679"/>
    </conflict>
</comment>